<gene>
    <name evidence="1" type="primary">fliE</name>
    <name type="ordered locus">SeSA_A2125</name>
</gene>
<dbReference type="EMBL" id="CP001127">
    <property type="protein sequence ID" value="ACF91245.1"/>
    <property type="molecule type" value="Genomic_DNA"/>
</dbReference>
<dbReference type="RefSeq" id="WP_000719037.1">
    <property type="nucleotide sequence ID" value="NC_011094.1"/>
</dbReference>
<dbReference type="SMR" id="B4TZJ7"/>
<dbReference type="KEGG" id="sew:SeSA_A2125"/>
<dbReference type="HOGENOM" id="CLU_147249_0_2_6"/>
<dbReference type="Proteomes" id="UP000001865">
    <property type="component" value="Chromosome"/>
</dbReference>
<dbReference type="GO" id="GO:0009425">
    <property type="term" value="C:bacterial-type flagellum basal body"/>
    <property type="evidence" value="ECO:0007669"/>
    <property type="project" value="UniProtKB-SubCell"/>
</dbReference>
<dbReference type="GO" id="GO:0003774">
    <property type="term" value="F:cytoskeletal motor activity"/>
    <property type="evidence" value="ECO:0007669"/>
    <property type="project" value="InterPro"/>
</dbReference>
<dbReference type="GO" id="GO:0005198">
    <property type="term" value="F:structural molecule activity"/>
    <property type="evidence" value="ECO:0007669"/>
    <property type="project" value="InterPro"/>
</dbReference>
<dbReference type="GO" id="GO:0071973">
    <property type="term" value="P:bacterial-type flagellum-dependent cell motility"/>
    <property type="evidence" value="ECO:0007669"/>
    <property type="project" value="InterPro"/>
</dbReference>
<dbReference type="HAMAP" id="MF_00724">
    <property type="entry name" value="FliE"/>
    <property type="match status" value="1"/>
</dbReference>
<dbReference type="InterPro" id="IPR001624">
    <property type="entry name" value="FliE"/>
</dbReference>
<dbReference type="NCBIfam" id="TIGR00205">
    <property type="entry name" value="fliE"/>
    <property type="match status" value="1"/>
</dbReference>
<dbReference type="PANTHER" id="PTHR34653">
    <property type="match status" value="1"/>
</dbReference>
<dbReference type="PANTHER" id="PTHR34653:SF1">
    <property type="entry name" value="FLAGELLAR HOOK-BASAL BODY COMPLEX PROTEIN FLIE"/>
    <property type="match status" value="1"/>
</dbReference>
<dbReference type="Pfam" id="PF02049">
    <property type="entry name" value="FliE"/>
    <property type="match status" value="1"/>
</dbReference>
<dbReference type="PRINTS" id="PR01006">
    <property type="entry name" value="FLGHOOKFLIE"/>
</dbReference>
<feature type="chain" id="PRO_1000132676" description="Flagellar hook-basal body complex protein FliE">
    <location>
        <begin position="1"/>
        <end position="104"/>
    </location>
</feature>
<keyword id="KW-0975">Bacterial flagellum</keyword>
<organism>
    <name type="scientific">Salmonella schwarzengrund (strain CVM19633)</name>
    <dbReference type="NCBI Taxonomy" id="439843"/>
    <lineage>
        <taxon>Bacteria</taxon>
        <taxon>Pseudomonadati</taxon>
        <taxon>Pseudomonadota</taxon>
        <taxon>Gammaproteobacteria</taxon>
        <taxon>Enterobacterales</taxon>
        <taxon>Enterobacteriaceae</taxon>
        <taxon>Salmonella</taxon>
    </lineage>
</organism>
<sequence>MAAIQGIEGVISQLQATAMAARGQDTHSQSTVSFAGQLHAALDRISDRQTAARVQAEKFTLGEPGIALNDVMADMQKASVSMQMGIQVRNKLVAAYQEVMSMQV</sequence>
<name>FLIE_SALSV</name>
<proteinExistence type="inferred from homology"/>
<accession>B4TZJ7</accession>
<reference key="1">
    <citation type="journal article" date="2011" name="J. Bacteriol.">
        <title>Comparative genomics of 28 Salmonella enterica isolates: evidence for CRISPR-mediated adaptive sublineage evolution.</title>
        <authorList>
            <person name="Fricke W.F."/>
            <person name="Mammel M.K."/>
            <person name="McDermott P.F."/>
            <person name="Tartera C."/>
            <person name="White D.G."/>
            <person name="Leclerc J.E."/>
            <person name="Ravel J."/>
            <person name="Cebula T.A."/>
        </authorList>
    </citation>
    <scope>NUCLEOTIDE SEQUENCE [LARGE SCALE GENOMIC DNA]</scope>
    <source>
        <strain>CVM19633</strain>
    </source>
</reference>
<comment type="subcellular location">
    <subcellularLocation>
        <location evidence="1">Bacterial flagellum basal body</location>
    </subcellularLocation>
</comment>
<comment type="similarity">
    <text evidence="1">Belongs to the FliE family.</text>
</comment>
<evidence type="ECO:0000255" key="1">
    <source>
        <dbReference type="HAMAP-Rule" id="MF_00724"/>
    </source>
</evidence>
<protein>
    <recommendedName>
        <fullName evidence="1">Flagellar hook-basal body complex protein FliE</fullName>
    </recommendedName>
</protein>